<sequence>MSWGTELWDQFDNLEKHTQWGIDFLDKYAKFVKERLEIEQNYAKQLRNLVKKYCPKRSAKDEEPRFTSCLSFYNILNELNDYAGQREVVAEEMGHRVYAEIMRYSNDIKGERKSHLQEGRKAQQYLDMCLKQMDNSKRKFERECREAEKAQQTYERLDNDSNATKSDVEKAKQQLHLRTHMADESKNEYAAQLQNYNAEQHKHFYIVIPQVYKHLQEMDERRTVKLSECYKGFADAERKVIPIISKCLEGMVQAAKSVDERRDSQIVVDCFKSGFEPNGDYPFEDYSQHIYRTVSDGTISTPKQESLKPDPRVTVGKAKGKLWLFGKKPKGPALEDFSHLPPEQRRKRLQQRIDELSRELQKEMDQKDALNKMKDVYEKNPQMGDPSSLHPKIAETTSNIERLRMEIHKNEAWLSEVEGKVSQRSERRHSAEANHLVAQGRESPEGSYTEDANQEGRVQPQPHAHPEFDDEFDDDEPLPAIGHCKSLYPFDGNNEGTLAMKEGEVLYIIEEDKGDGWTRARKQNGEEGYVPTSYIDITLEKNSKGAVTYI</sequence>
<feature type="chain" id="PRO_0000261438" description="Formin-binding protein 1-like">
    <location>
        <begin position="1"/>
        <end position="550"/>
    </location>
</feature>
<feature type="domain" description="F-BAR" evidence="3">
    <location>
        <begin position="1"/>
        <end position="263"/>
    </location>
</feature>
<feature type="domain" description="REM-1" evidence="4">
    <location>
        <begin position="339"/>
        <end position="416"/>
    </location>
</feature>
<feature type="domain" description="SH3" evidence="2">
    <location>
        <begin position="479"/>
        <end position="540"/>
    </location>
</feature>
<feature type="region of interest" description="Disordered" evidence="5">
    <location>
        <begin position="423"/>
        <end position="467"/>
    </location>
</feature>
<feature type="coiled-coil region" evidence="1">
    <location>
        <begin position="66"/>
        <end position="258"/>
    </location>
</feature>
<feature type="coiled-coil region" evidence="1">
    <location>
        <begin position="334"/>
        <end position="426"/>
    </location>
</feature>
<feature type="compositionally biased region" description="Basic and acidic residues" evidence="5">
    <location>
        <begin position="423"/>
        <end position="432"/>
    </location>
</feature>
<feature type="site" description="Mediates end-to-end attachment of dimers" evidence="1">
    <location>
        <position position="165"/>
    </location>
</feature>
<feature type="helix" evidence="7">
    <location>
        <begin position="342"/>
        <end position="379"/>
    </location>
</feature>
<feature type="helix" evidence="7">
    <location>
        <begin position="386"/>
        <end position="389"/>
    </location>
</feature>
<feature type="helix" evidence="7">
    <location>
        <begin position="390"/>
        <end position="417"/>
    </location>
</feature>
<comment type="function">
    <text evidence="1">Required to coordinate membrane tubulation with reorganization of the actin cytoskeleton during endocytosis. Promotes cdc42-induced actin polymerization by activating the wasl-waspip complex, the predominant form of wasl/n-wasp in cells. Essential for autophagy of intracellular bacterial pathogens (By similarity).</text>
</comment>
<comment type="subunit">
    <text evidence="1">Homodimerizes, the dimers can polymerize end-to-end to form filamentous structures. Interacts with GTP-bound cdc42 and wasl/n-wasp (By similarity).</text>
</comment>
<comment type="subcellular location">
    <subcellularLocation>
        <location evidence="1">Cytoplasm</location>
    </subcellularLocation>
    <subcellularLocation>
        <location evidence="1">Cytoplasm</location>
        <location evidence="1">Cytoskeleton</location>
    </subcellularLocation>
    <subcellularLocation>
        <location evidence="1">Cytoplasm</location>
        <location evidence="1">Cell cortex</location>
    </subcellularLocation>
    <subcellularLocation>
        <location evidence="1">Cytoplasmic vesicle</location>
    </subcellularLocation>
    <subcellularLocation>
        <location evidence="1">Cell membrane</location>
        <topology evidence="1">Peripheral membrane protein</topology>
        <orientation evidence="1">Cytoplasmic side</orientation>
    </subcellularLocation>
</comment>
<comment type="domain">
    <text evidence="1">The F-BAR domain binds the phospholipid membrane with its concave surface. The end-to-end polymerization of dimers of these domains provides a curved surface that fits best membranes with around 600 A diameter, and may drive tubulation (By similarity).</text>
</comment>
<comment type="similarity">
    <text evidence="6">Belongs to the FNBP1 family.</text>
</comment>
<proteinExistence type="evidence at protein level"/>
<reference key="1">
    <citation type="journal article" date="2004" name="Cell">
        <title>Toca-1 mediates Cdc42-dependent actin nucleation by activating the N-WASP-WIP complex.</title>
        <authorList>
            <person name="Ho H.-Y.H."/>
            <person name="Rohatgi R."/>
            <person name="Lebensohn A.M."/>
            <person name="Ma L."/>
            <person name="Li J."/>
            <person name="Gygi S.P."/>
            <person name="Kirschner M.W."/>
        </authorList>
    </citation>
    <scope>NUCLEOTIDE SEQUENCE [MRNA]</scope>
</reference>
<reference key="2">
    <citation type="submission" date="2004-08" db="EMBL/GenBank/DDBJ databases">
        <authorList>
            <consortium name="NIH - Xenopus Gene Collection (XGC) project"/>
        </authorList>
    </citation>
    <scope>NUCLEOTIDE SEQUENCE [LARGE SCALE MRNA]</scope>
    <source>
        <tissue>Embryo</tissue>
    </source>
</reference>
<reference key="3">
    <citation type="submission" date="2006-06" db="EMBL/GenBank/DDBJ databases">
        <authorList>
            <consortium name="Sanger Xenopus tropicalis EST/cDNA project"/>
        </authorList>
    </citation>
    <scope>NUCLEOTIDE SEQUENCE [LARGE SCALE MRNA] OF 262-550</scope>
    <source>
        <tissue>Egg</tissue>
    </source>
</reference>
<accession>Q6GUF4</accession>
<accession>Q28GK4</accession>
<protein>
    <recommendedName>
        <fullName>Formin-binding protein 1-like</fullName>
    </recommendedName>
    <alternativeName>
        <fullName>Transducer of Cdc42-dependent actin assembly protein 1</fullName>
        <shortName>Toca-1</shortName>
    </alternativeName>
</protein>
<name>FBP1L_XENTR</name>
<dbReference type="EMBL" id="AY640054">
    <property type="protein sequence ID" value="AAT57673.1"/>
    <property type="molecule type" value="mRNA"/>
</dbReference>
<dbReference type="EMBL" id="BC080954">
    <property type="protein sequence ID" value="AAH80954.1"/>
    <property type="molecule type" value="mRNA"/>
</dbReference>
<dbReference type="EMBL" id="CR761355">
    <property type="protein sequence ID" value="CAJ81365.1"/>
    <property type="molecule type" value="mRNA"/>
</dbReference>
<dbReference type="RefSeq" id="NP_001005148.1">
    <property type="nucleotide sequence ID" value="NM_001005148.1"/>
</dbReference>
<dbReference type="PDB" id="5FRG">
    <property type="method" value="NMR"/>
    <property type="chains" value="A=330-426"/>
</dbReference>
<dbReference type="PDBsum" id="5FRG"/>
<dbReference type="SMR" id="Q6GUF4"/>
<dbReference type="FunCoup" id="Q6GUF4">
    <property type="interactions" value="2370"/>
</dbReference>
<dbReference type="STRING" id="8364.ENSXETP00000051342"/>
<dbReference type="DNASU" id="448740"/>
<dbReference type="GeneID" id="448740"/>
<dbReference type="KEGG" id="xtr:448740"/>
<dbReference type="AGR" id="Xenbase:XB-GENE-489112"/>
<dbReference type="CTD" id="54874"/>
<dbReference type="Xenbase" id="XB-GENE-489112">
    <property type="gene designation" value="fnbp1l"/>
</dbReference>
<dbReference type="InParanoid" id="Q6GUF4"/>
<dbReference type="OrthoDB" id="8783038at2759"/>
<dbReference type="EvolutionaryTrace" id="Q6GUF4"/>
<dbReference type="Proteomes" id="UP000008143">
    <property type="component" value="Chromosome 4"/>
</dbReference>
<dbReference type="Bgee" id="ENSXETG00000008227">
    <property type="expression patterns" value="Expressed in 4-cell stage embryo and 12 other cell types or tissues"/>
</dbReference>
<dbReference type="ExpressionAtlas" id="Q6GUF4">
    <property type="expression patterns" value="baseline"/>
</dbReference>
<dbReference type="GO" id="GO:0005938">
    <property type="term" value="C:cell cortex"/>
    <property type="evidence" value="ECO:0007669"/>
    <property type="project" value="UniProtKB-SubCell"/>
</dbReference>
<dbReference type="GO" id="GO:0031410">
    <property type="term" value="C:cytoplasmic vesicle"/>
    <property type="evidence" value="ECO:0007669"/>
    <property type="project" value="UniProtKB-KW"/>
</dbReference>
<dbReference type="GO" id="GO:0005856">
    <property type="term" value="C:cytoskeleton"/>
    <property type="evidence" value="ECO:0007669"/>
    <property type="project" value="UniProtKB-SubCell"/>
</dbReference>
<dbReference type="GO" id="GO:0005886">
    <property type="term" value="C:plasma membrane"/>
    <property type="evidence" value="ECO:0007669"/>
    <property type="project" value="UniProtKB-SubCell"/>
</dbReference>
<dbReference type="GO" id="GO:0008289">
    <property type="term" value="F:lipid binding"/>
    <property type="evidence" value="ECO:0007669"/>
    <property type="project" value="UniProtKB-KW"/>
</dbReference>
<dbReference type="GO" id="GO:0006914">
    <property type="term" value="P:autophagy"/>
    <property type="evidence" value="ECO:0007669"/>
    <property type="project" value="UniProtKB-KW"/>
</dbReference>
<dbReference type="GO" id="GO:0006897">
    <property type="term" value="P:endocytosis"/>
    <property type="evidence" value="ECO:0007669"/>
    <property type="project" value="UniProtKB-KW"/>
</dbReference>
<dbReference type="GO" id="GO:0007165">
    <property type="term" value="P:signal transduction"/>
    <property type="evidence" value="ECO:0007669"/>
    <property type="project" value="InterPro"/>
</dbReference>
<dbReference type="CDD" id="cd07675">
    <property type="entry name" value="F-BAR_FNBP1L"/>
    <property type="match status" value="1"/>
</dbReference>
<dbReference type="CDD" id="cd11628">
    <property type="entry name" value="HR1_CIP4_FNBP1L"/>
    <property type="match status" value="1"/>
</dbReference>
<dbReference type="CDD" id="cd12072">
    <property type="entry name" value="SH3_FNBP1L"/>
    <property type="match status" value="1"/>
</dbReference>
<dbReference type="FunFam" id="1.20.1270.60:FF:000002">
    <property type="entry name" value="Formin-binding protein 1-like isoform 1"/>
    <property type="match status" value="1"/>
</dbReference>
<dbReference type="FunFam" id="2.30.30.40:FF:000017">
    <property type="entry name" value="Formin-binding protein 1-like isoform 1"/>
    <property type="match status" value="1"/>
</dbReference>
<dbReference type="Gene3D" id="6.10.140.470">
    <property type="match status" value="1"/>
</dbReference>
<dbReference type="Gene3D" id="1.20.1270.60">
    <property type="entry name" value="Arfaptin homology (AH) domain/BAR domain"/>
    <property type="match status" value="1"/>
</dbReference>
<dbReference type="Gene3D" id="2.30.30.40">
    <property type="entry name" value="SH3 Domains"/>
    <property type="match status" value="1"/>
</dbReference>
<dbReference type="InterPro" id="IPR027267">
    <property type="entry name" value="AH/BAR_dom_sf"/>
</dbReference>
<dbReference type="InterPro" id="IPR031160">
    <property type="entry name" value="F_BAR"/>
</dbReference>
<dbReference type="InterPro" id="IPR001060">
    <property type="entry name" value="FCH_dom"/>
</dbReference>
<dbReference type="InterPro" id="IPR035494">
    <property type="entry name" value="FNBP1L_F-BAR"/>
</dbReference>
<dbReference type="InterPro" id="IPR035493">
    <property type="entry name" value="FNBP1L_SH3"/>
</dbReference>
<dbReference type="InterPro" id="IPR011072">
    <property type="entry name" value="HR1_rho-bd"/>
</dbReference>
<dbReference type="InterPro" id="IPR036028">
    <property type="entry name" value="SH3-like_dom_sf"/>
</dbReference>
<dbReference type="InterPro" id="IPR001452">
    <property type="entry name" value="SH3_domain"/>
</dbReference>
<dbReference type="PANTHER" id="PTHR15735">
    <property type="entry name" value="FCH AND DOUBLE SH3 DOMAINS PROTEIN"/>
    <property type="match status" value="1"/>
</dbReference>
<dbReference type="PANTHER" id="PTHR15735:SF14">
    <property type="entry name" value="FORMIN-BINDING PROTEIN 1-LIKE"/>
    <property type="match status" value="1"/>
</dbReference>
<dbReference type="Pfam" id="PF00611">
    <property type="entry name" value="FCH"/>
    <property type="match status" value="1"/>
</dbReference>
<dbReference type="Pfam" id="PF00018">
    <property type="entry name" value="SH3_1"/>
    <property type="match status" value="1"/>
</dbReference>
<dbReference type="SMART" id="SM00055">
    <property type="entry name" value="FCH"/>
    <property type="match status" value="1"/>
</dbReference>
<dbReference type="SMART" id="SM00326">
    <property type="entry name" value="SH3"/>
    <property type="match status" value="1"/>
</dbReference>
<dbReference type="SUPFAM" id="SSF103657">
    <property type="entry name" value="BAR/IMD domain-like"/>
    <property type="match status" value="1"/>
</dbReference>
<dbReference type="SUPFAM" id="SSF50044">
    <property type="entry name" value="SH3-domain"/>
    <property type="match status" value="1"/>
</dbReference>
<dbReference type="PROSITE" id="PS51741">
    <property type="entry name" value="F_BAR"/>
    <property type="match status" value="1"/>
</dbReference>
<dbReference type="PROSITE" id="PS51860">
    <property type="entry name" value="REM_1"/>
    <property type="match status" value="1"/>
</dbReference>
<dbReference type="PROSITE" id="PS50002">
    <property type="entry name" value="SH3"/>
    <property type="match status" value="1"/>
</dbReference>
<keyword id="KW-0002">3D-structure</keyword>
<keyword id="KW-0072">Autophagy</keyword>
<keyword id="KW-1003">Cell membrane</keyword>
<keyword id="KW-0175">Coiled coil</keyword>
<keyword id="KW-0963">Cytoplasm</keyword>
<keyword id="KW-0968">Cytoplasmic vesicle</keyword>
<keyword id="KW-0206">Cytoskeleton</keyword>
<keyword id="KW-0254">Endocytosis</keyword>
<keyword id="KW-0446">Lipid-binding</keyword>
<keyword id="KW-0472">Membrane</keyword>
<keyword id="KW-1185">Reference proteome</keyword>
<keyword id="KW-0728">SH3 domain</keyword>
<gene>
    <name type="primary">fnbp1l</name>
    <name type="synonym">toca1</name>
    <name type="ORF">TEgg061f15.1</name>
</gene>
<organism>
    <name type="scientific">Xenopus tropicalis</name>
    <name type="common">Western clawed frog</name>
    <name type="synonym">Silurana tropicalis</name>
    <dbReference type="NCBI Taxonomy" id="8364"/>
    <lineage>
        <taxon>Eukaryota</taxon>
        <taxon>Metazoa</taxon>
        <taxon>Chordata</taxon>
        <taxon>Craniata</taxon>
        <taxon>Vertebrata</taxon>
        <taxon>Euteleostomi</taxon>
        <taxon>Amphibia</taxon>
        <taxon>Batrachia</taxon>
        <taxon>Anura</taxon>
        <taxon>Pipoidea</taxon>
        <taxon>Pipidae</taxon>
        <taxon>Xenopodinae</taxon>
        <taxon>Xenopus</taxon>
        <taxon>Silurana</taxon>
    </lineage>
</organism>
<evidence type="ECO:0000250" key="1"/>
<evidence type="ECO:0000255" key="2">
    <source>
        <dbReference type="PROSITE-ProRule" id="PRU00192"/>
    </source>
</evidence>
<evidence type="ECO:0000255" key="3">
    <source>
        <dbReference type="PROSITE-ProRule" id="PRU01077"/>
    </source>
</evidence>
<evidence type="ECO:0000255" key="4">
    <source>
        <dbReference type="PROSITE-ProRule" id="PRU01207"/>
    </source>
</evidence>
<evidence type="ECO:0000256" key="5">
    <source>
        <dbReference type="SAM" id="MobiDB-lite"/>
    </source>
</evidence>
<evidence type="ECO:0000305" key="6"/>
<evidence type="ECO:0007829" key="7">
    <source>
        <dbReference type="PDB" id="5FRG"/>
    </source>
</evidence>